<reference key="1">
    <citation type="journal article" date="1990" name="J. Biol. Chem.">
        <title>Human bone sialoprotein. Deduced protein sequence and chromosomal localization.</title>
        <authorList>
            <person name="Fisher L.W."/>
            <person name="McBride O.W."/>
            <person name="Termine J.D."/>
            <person name="Young M.F."/>
        </authorList>
    </citation>
    <scope>NUCLEOTIDE SEQUENCE [MRNA]</scope>
    <scope>VARIANTS GLY-213; GLY-219 AND VAL-268</scope>
</reference>
<reference key="2">
    <citation type="journal article" date="1993" name="Genomics">
        <title>The human bone sialoprotein gene (IBSP): genomic localization and characterization.</title>
        <authorList>
            <person name="Kerr J.M."/>
            <person name="Fisher L.W."/>
            <person name="Termine J.D."/>
            <person name="Wang M.G."/>
            <person name="McBride W."/>
            <person name="Young M.F."/>
        </authorList>
    </citation>
    <scope>NUCLEOTIDE SEQUENCE [GENOMIC DNA]</scope>
    <scope>VARIANTS GLU-195; GLY-213; GLY-219 AND ASP-270</scope>
</reference>
<reference key="3">
    <citation type="journal article" date="1994" name="Matrix Biol.">
        <title>Characterization of the human bone sialoprotein (BSP) gene and its promoter sequence.</title>
        <authorList>
            <person name="Kim R.H."/>
            <person name="Shapiro H.S."/>
            <person name="Li J.J."/>
            <person name="Wrana J.L."/>
            <person name="Sodek J."/>
        </authorList>
    </citation>
    <scope>NUCLEOTIDE SEQUENCE [GENOMIC DNA]</scope>
    <scope>VARIANTS GLU-195; GLY-213 AND ASP-270</scope>
</reference>
<reference key="4">
    <citation type="journal article" date="2005" name="Nature">
        <title>Generation and annotation of the DNA sequences of human chromosomes 2 and 4.</title>
        <authorList>
            <person name="Hillier L.W."/>
            <person name="Graves T.A."/>
            <person name="Fulton R.S."/>
            <person name="Fulton L.A."/>
            <person name="Pepin K.H."/>
            <person name="Minx P."/>
            <person name="Wagner-McPherson C."/>
            <person name="Layman D."/>
            <person name="Wylie K."/>
            <person name="Sekhon M."/>
            <person name="Becker M.C."/>
            <person name="Fewell G.A."/>
            <person name="Delehaunty K.D."/>
            <person name="Miner T.L."/>
            <person name="Nash W.E."/>
            <person name="Kremitzki C."/>
            <person name="Oddy L."/>
            <person name="Du H."/>
            <person name="Sun H."/>
            <person name="Bradshaw-Cordum H."/>
            <person name="Ali J."/>
            <person name="Carter J."/>
            <person name="Cordes M."/>
            <person name="Harris A."/>
            <person name="Isak A."/>
            <person name="van Brunt A."/>
            <person name="Nguyen C."/>
            <person name="Du F."/>
            <person name="Courtney L."/>
            <person name="Kalicki J."/>
            <person name="Ozersky P."/>
            <person name="Abbott S."/>
            <person name="Armstrong J."/>
            <person name="Belter E.A."/>
            <person name="Caruso L."/>
            <person name="Cedroni M."/>
            <person name="Cotton M."/>
            <person name="Davidson T."/>
            <person name="Desai A."/>
            <person name="Elliott G."/>
            <person name="Erb T."/>
            <person name="Fronick C."/>
            <person name="Gaige T."/>
            <person name="Haakenson W."/>
            <person name="Haglund K."/>
            <person name="Holmes A."/>
            <person name="Harkins R."/>
            <person name="Kim K."/>
            <person name="Kruchowski S.S."/>
            <person name="Strong C.M."/>
            <person name="Grewal N."/>
            <person name="Goyea E."/>
            <person name="Hou S."/>
            <person name="Levy A."/>
            <person name="Martinka S."/>
            <person name="Mead K."/>
            <person name="McLellan M.D."/>
            <person name="Meyer R."/>
            <person name="Randall-Maher J."/>
            <person name="Tomlinson C."/>
            <person name="Dauphin-Kohlberg S."/>
            <person name="Kozlowicz-Reilly A."/>
            <person name="Shah N."/>
            <person name="Swearengen-Shahid S."/>
            <person name="Snider J."/>
            <person name="Strong J.T."/>
            <person name="Thompson J."/>
            <person name="Yoakum M."/>
            <person name="Leonard S."/>
            <person name="Pearman C."/>
            <person name="Trani L."/>
            <person name="Radionenko M."/>
            <person name="Waligorski J.E."/>
            <person name="Wang C."/>
            <person name="Rock S.M."/>
            <person name="Tin-Wollam A.-M."/>
            <person name="Maupin R."/>
            <person name="Latreille P."/>
            <person name="Wendl M.C."/>
            <person name="Yang S.-P."/>
            <person name="Pohl C."/>
            <person name="Wallis J.W."/>
            <person name="Spieth J."/>
            <person name="Bieri T.A."/>
            <person name="Berkowicz N."/>
            <person name="Nelson J.O."/>
            <person name="Osborne J."/>
            <person name="Ding L."/>
            <person name="Meyer R."/>
            <person name="Sabo A."/>
            <person name="Shotland Y."/>
            <person name="Sinha P."/>
            <person name="Wohldmann P.E."/>
            <person name="Cook L.L."/>
            <person name="Hickenbotham M.T."/>
            <person name="Eldred J."/>
            <person name="Williams D."/>
            <person name="Jones T.A."/>
            <person name="She X."/>
            <person name="Ciccarelli F.D."/>
            <person name="Izaurralde E."/>
            <person name="Taylor J."/>
            <person name="Schmutz J."/>
            <person name="Myers R.M."/>
            <person name="Cox D.R."/>
            <person name="Huang X."/>
            <person name="McPherson J.D."/>
            <person name="Mardis E.R."/>
            <person name="Clifton S.W."/>
            <person name="Warren W.C."/>
            <person name="Chinwalla A.T."/>
            <person name="Eddy S.R."/>
            <person name="Marra M.A."/>
            <person name="Ovcharenko I."/>
            <person name="Furey T.S."/>
            <person name="Miller W."/>
            <person name="Eichler E.E."/>
            <person name="Bork P."/>
            <person name="Suyama M."/>
            <person name="Torrents D."/>
            <person name="Waterston R.H."/>
            <person name="Wilson R.K."/>
        </authorList>
    </citation>
    <scope>NUCLEOTIDE SEQUENCE [LARGE SCALE GENOMIC DNA]</scope>
</reference>
<reference key="5">
    <citation type="journal article" date="1987" name="J. Biol. Chem.">
        <title>Purification and partial characterization of small proteoglycans I and II, bone sialoproteins I and II, and osteonectin from the mineral compartment of developing human bone.</title>
        <authorList>
            <person name="Fisher L.W."/>
            <person name="Hawkins G.R."/>
            <person name="Tuross N."/>
            <person name="Termine J.D."/>
        </authorList>
    </citation>
    <scope>PARTIAL PROTEIN SEQUENCE</scope>
    <scope>CHARACTERIZATION</scope>
</reference>
<reference key="6">
    <citation type="journal article" date="2001" name="J. Biol. Chem.">
        <title>Structural characterization of human recombinant and bone-derived bone sialoprotein. Functional implications for cell attachment and hydroxyapatite binding.</title>
        <authorList>
            <person name="Wuttke M."/>
            <person name="Muller S."/>
            <person name="Nitsche D.P."/>
            <person name="Paulsson M."/>
            <person name="Hanisch F.G."/>
            <person name="Maurer P."/>
        </authorList>
    </citation>
    <scope>PARTIAL PROTEIN SEQUENCE</scope>
    <scope>FUNCTION</scope>
    <scope>SUBUNIT</scope>
    <scope>SUBCELLULAR LOCATION</scope>
    <scope>TISSUE SPECIFICITY</scope>
    <scope>GLYCOSYLATION AT THR-119; THR-122; THR-227; THR-228; THR-229; THR-238 AND THR-239</scope>
    <scope>STRUCTURE OF CARBOHYDRATE</scope>
    <scope>VARIANT GLY-213</scope>
    <scope>IDENTIFICATION BY MASS SPECTROMETRY</scope>
</reference>
<reference key="7">
    <citation type="journal article" date="1991" name="Calcif. Tissue Int.">
        <title>Expression of bone sialoprotein (BSP) in developing human tissues.</title>
        <authorList>
            <person name="Bianco P."/>
            <person name="Fisher L.W."/>
            <person name="Young M.F."/>
            <person name="Termine J.D."/>
            <person name="Robey P.G."/>
        </authorList>
    </citation>
    <scope>FUNCTION</scope>
    <scope>TISSUE SPECIFICITY</scope>
    <scope>DEVELOPMENTAL STAGE</scope>
</reference>
<reference key="8">
    <citation type="journal article" date="2000" name="Exp. Cell Res.">
        <title>Activation of integrin alpha(V)beta(3) regulates cell adhesion and migration to bone sialoprotein.</title>
        <authorList>
            <person name="Byzova T.V."/>
            <person name="Kim W."/>
            <person name="Midura R.J."/>
            <person name="Plow E.F."/>
        </authorList>
    </citation>
    <scope>FUNCTION</scope>
    <scope>DOMAIN</scope>
</reference>
<reference key="9">
    <citation type="journal article" date="2001" name="Biochemistry">
        <title>Posttranslational modifications to human bone sialoprotein determined by mass spectrometry.</title>
        <authorList>
            <person name="Zaia J."/>
            <person name="Boynton R."/>
            <person name="Heinegard D."/>
            <person name="Barry F."/>
        </authorList>
    </citation>
    <scope>PHOSPHORYLATION AT SER-31</scope>
    <scope>SULFATION AT TYR-313 AND TYR-314</scope>
    <scope>IDENTIFICATION BY MASS SPECTROMETRY</scope>
</reference>
<reference key="10">
    <citation type="journal article" date="2013" name="Eur. J. Oral Sci.">
        <title>Structure-activity relationship of human bone sialoprotein peptides.</title>
        <authorList>
            <person name="Rapuano B.E."/>
            <person name="MacDonald D.E."/>
        </authorList>
    </citation>
    <scope>FUNCTION</scope>
    <scope>DOMAIN</scope>
    <scope>MUTAGENESIS OF 286-ARG--ASP-288 AND ASP-288</scope>
</reference>
<reference key="11">
    <citation type="journal article" date="2022" name="Cell Rep.">
        <title>A molecular interactome of the glioblastoma perivascular niche reveals integrin binding sialoprotein as a mediator of tumor cell migration.</title>
        <authorList>
            <person name="Ghochani Y."/>
            <person name="Muthukrishnan S.D."/>
            <person name="Sohrabi A."/>
            <person name="Kawaguchi R."/>
            <person name="Condro M.C."/>
            <person name="Bastola S."/>
            <person name="Gao F."/>
            <person name="Qin Y."/>
            <person name="Mottahedeh J."/>
            <person name="Iruela-Arispe M.L."/>
            <person name="Rao N."/>
            <person name="Laks D.R."/>
            <person name="Liau L.M."/>
            <person name="Mathern G.W."/>
            <person name="Goldman S.A."/>
            <person name="Carmichael S.T."/>
            <person name="Nakano I."/>
            <person name="Coppola G."/>
            <person name="Seidlits S.K."/>
            <person name="Kornblum H.I."/>
        </authorList>
    </citation>
    <scope>TISSUE SPECIFICITY</scope>
</reference>
<proteinExistence type="evidence at protein level"/>
<organism>
    <name type="scientific">Homo sapiens</name>
    <name type="common">Human</name>
    <dbReference type="NCBI Taxonomy" id="9606"/>
    <lineage>
        <taxon>Eukaryota</taxon>
        <taxon>Metazoa</taxon>
        <taxon>Chordata</taxon>
        <taxon>Craniata</taxon>
        <taxon>Vertebrata</taxon>
        <taxon>Euteleostomi</taxon>
        <taxon>Mammalia</taxon>
        <taxon>Eutheria</taxon>
        <taxon>Euarchontoglires</taxon>
        <taxon>Primates</taxon>
        <taxon>Haplorrhini</taxon>
        <taxon>Catarrhini</taxon>
        <taxon>Hominidae</taxon>
        <taxon>Homo</taxon>
    </lineage>
</organism>
<name>SIAL_HUMAN</name>
<comment type="function">
    <text evidence="4 5 7 9">Binds tightly to hydroxyapatite (PubMed:11459848). Appears to form an integral part of the mineralized matrix (PubMed:1818768). Probably important to cell-matrix interaction (PubMed:1818768). Promotes adhesion and migration of various cells via the alpha-V/beta-3 integrin receptor (ITGAV:ITGB3) (PubMed:10640428, PubMed:11459848, PubMed:24103036).</text>
</comment>
<comment type="subunit">
    <text evidence="1 5">Monomer (PubMed:11459848). Interacts with integrins; the interaction promotes cell adhesion (By similarity).</text>
</comment>
<comment type="interaction">
    <interactant intactId="EBI-18400392">
        <id>P21815</id>
    </interactant>
    <interactant intactId="EBI-10175124">
        <id>Q8IZU0</id>
        <label>FAM9B</label>
    </interactant>
    <organismsDiffer>false</organismsDiffer>
    <experiments>3</experiments>
</comment>
<comment type="interaction">
    <interactant intactId="EBI-18400392">
        <id>P21815</id>
    </interactant>
    <interactant intactId="EBI-12175685">
        <id>Q14802-3</id>
        <label>FXYD3</label>
    </interactant>
    <organismsDiffer>false</organismsDiffer>
    <experiments>3</experiments>
</comment>
<comment type="subcellular location">
    <subcellularLocation>
        <location evidence="5">Secreted</location>
    </subcellularLocation>
</comment>
<comment type="tissue specificity">
    <text evidence="5 7 10">Expressed in bone (at protein level) (PubMed:11459848). Expressed in trophoblast cells of placenta (at protein level) (PubMed:1818768). Expressed in brain (PubMed:36261010).</text>
</comment>
<comment type="developmental stage">
    <text evidence="7">In fetal developing bone of gestational age of 14-17 weeks, expressed in mature osteoblasts, young osteocytes and osteoclasts (at protein level) (PubMed:1818768). Expressed in bone matrix (at protein level) (PubMed:1818768). Expressed in osteoid at the borderline with mature mineralized matrix (at protein level) (PubMed:1818768). Expressed in chondrocytes in the growth plate (at protein level) (PubMed:1818768). Not detected in preosteogenic cells in the inner layer of the periosteum and in the fibroblastic cells in the outer layer (at protein level) (PubMed:1818768). Not detected in cartilage matrix (at protein level) (PubMed:1818768). Not detected in ocular tissues, skin, tendon, muscle and kidney of gestational age of 14-17 weeks (at protein level) (PubMed:1818768).</text>
</comment>
<comment type="domain">
    <text evidence="4 9">The Arg-Gly-Asp (RGD) sequence serves as an integrin-binding motif and is required for integrin-mediated cell attachment.</text>
</comment>
<comment type="PTM">
    <text evidence="5">N-glycosylated; glycans consist of sialylated and core-fucosylated bi-, tri- and tetraantennary chains.</text>
</comment>
<comment type="PTM">
    <text evidence="5">O-glycosylated at eight sites; mucin-type glycans contain Gal, GlcNAc, GalNAc and terminal NeuAc.</text>
</comment>
<comment type="miscellaneous">
    <text evidence="4 10">It is possible that the segments of clustered carboxyl groups mediate the strong binding to hydroxyapatite. Highly expressed in glioblastoma samples, especially in microvascular-enriched regions (PubMed:36261010). Elevated expression correlates with poor survival in patients with proneural glioblastomas (PubMed:36261010). Promotes up-regulation of genes associated with mesenchymal phenotype in proneural glioblastoma cultures (PubMed:36261010). Promotes migration and proliferation of glioblastoma, breast carcinoma and melanoma cells (PubMed:10640428, PubMed:36261010). ITGAV, ITGAV:ITGB3 or ITGAV:ITGB5 act as integrin receptors for IBSP in glioblastoma, breast carcinoma and melanoma cells (PubMed:10640428, PubMed:36261010).</text>
</comment>
<sequence>MKTALILLSILGMACAFSMKNLHRRVKIEDSEENGVFKYRPRYYLYKHAYFYPHLKRFPVQGSSDSSEENGDDSSEEEEEEEETSNEGENNEESNEDEDSEAENTTLSATTLGYGEDATPGTGYTGLAAIQLPKKAGDITNKATKEKESDEEEEEEEEGNENEESEAEVDENEQGINGTSTNSTEAENGNGSSGGDNGEEGEEESVTGANAEDTTETGRQGKGTSKTTTSPNGGFEPTTPPQVYRTTSPPFGKTTTVEYEGEYEYTGANEYDNGYEIYESENGEPRGDNYRAYEDEYSYFKGQGYDGYDGQNYYHHQ</sequence>
<feature type="signal peptide" evidence="2">
    <location>
        <begin position="1"/>
        <end position="16"/>
    </location>
</feature>
<feature type="chain" id="PRO_0000020330" description="Integrin-binding sialoprotein">
    <location>
        <begin position="17"/>
        <end position="317"/>
    </location>
</feature>
<feature type="region of interest" description="Disordered" evidence="3">
    <location>
        <begin position="58"/>
        <end position="254"/>
    </location>
</feature>
<feature type="short sequence motif" description="Integrin-binding motif" evidence="15 17">
    <location>
        <begin position="286"/>
        <end position="288"/>
    </location>
</feature>
<feature type="compositionally biased region" description="Acidic residues" evidence="3">
    <location>
        <begin position="66"/>
        <end position="102"/>
    </location>
</feature>
<feature type="compositionally biased region" description="Acidic residues" evidence="3">
    <location>
        <begin position="149"/>
        <end position="173"/>
    </location>
</feature>
<feature type="compositionally biased region" description="Polar residues" evidence="3">
    <location>
        <begin position="222"/>
        <end position="232"/>
    </location>
</feature>
<feature type="modified residue" description="Phosphoserine" evidence="6">
    <location>
        <position position="31"/>
    </location>
</feature>
<feature type="modified residue" description="Phosphoserine" evidence="1">
    <location>
        <position position="67"/>
    </location>
</feature>
<feature type="modified residue" description="Phosphoserine" evidence="1">
    <location>
        <position position="74"/>
    </location>
</feature>
<feature type="modified residue" description="Phosphoserine" evidence="1">
    <location>
        <position position="75"/>
    </location>
</feature>
<feature type="modified residue" description="Phosphoserine" evidence="1">
    <location>
        <position position="94"/>
    </location>
</feature>
<feature type="modified residue" description="Phosphoserine" evidence="1">
    <location>
        <position position="100"/>
    </location>
</feature>
<feature type="modified residue" description="Phosphoserine" evidence="1">
    <location>
        <position position="149"/>
    </location>
</feature>
<feature type="modified residue" description="Phosphoserine" evidence="1">
    <location>
        <position position="280"/>
    </location>
</feature>
<feature type="modified residue" description="Sulfotyrosine" evidence="6">
    <location>
        <position position="313"/>
    </location>
</feature>
<feature type="modified residue" description="Sulfotyrosine" evidence="6">
    <location>
        <position position="314"/>
    </location>
</feature>
<feature type="glycosylation site" description="N-linked (GlcNAc...) asparagine" evidence="2">
    <location>
        <position position="104"/>
    </location>
</feature>
<feature type="glycosylation site" description="O-linked (GalNAc...) threonine" evidence="16">
    <location>
        <position position="119"/>
    </location>
</feature>
<feature type="glycosylation site" description="O-linked (GalNAc...) threonine" evidence="16">
    <location>
        <position position="122"/>
    </location>
</feature>
<feature type="glycosylation site" description="N-linked (GlcNAc...) asparagine" evidence="2">
    <location>
        <position position="177"/>
    </location>
</feature>
<feature type="glycosylation site" description="N-linked (GlcNAc...) asparagine" evidence="2">
    <location>
        <position position="182"/>
    </location>
</feature>
<feature type="glycosylation site" description="N-linked (GlcNAc...) asparagine" evidence="2">
    <location>
        <position position="190"/>
    </location>
</feature>
<feature type="glycosylation site" description="O-linked (GalNAc...) threonine" evidence="16">
    <location>
        <position position="227"/>
    </location>
</feature>
<feature type="glycosylation site" description="O-linked (GalNAc...) threonine" evidence="16">
    <location>
        <position position="228"/>
    </location>
</feature>
<feature type="glycosylation site" description="O-linked (GalNAc...) threonine" evidence="16">
    <location>
        <position position="229"/>
    </location>
</feature>
<feature type="glycosylation site" description="O-linked (GalNAc...) threonine" evidence="16">
    <location>
        <position position="238"/>
    </location>
</feature>
<feature type="glycosylation site" description="O-linked (GalNAc...) threonine" evidence="16">
    <location>
        <position position="239"/>
    </location>
</feature>
<feature type="sequence variant" id="VAR_058014" description="In dbSNP:rs1054627." evidence="11 12">
    <original>G</original>
    <variation>E</variation>
    <location>
        <position position="195"/>
    </location>
</feature>
<feature type="sequence variant" id="VAR_058015" description="In dbSNP:rs13144371." evidence="5 8 11 12">
    <original>D</original>
    <variation>G</variation>
    <location>
        <position position="213"/>
    </location>
</feature>
<feature type="sequence variant" id="VAR_058016" description="In dbSNP:rs17013181." evidence="8 12">
    <original>R</original>
    <variation>G</variation>
    <location>
        <position position="219"/>
    </location>
</feature>
<feature type="sequence variant" id="VAR_056579" description="In dbSNP:rs17013182.">
    <original>T</original>
    <variation>A</variation>
    <location>
        <position position="256"/>
    </location>
</feature>
<feature type="sequence variant" id="VAR_056580" description="In dbSNP:rs1054628." evidence="8">
    <original>A</original>
    <variation>V</variation>
    <location>
        <position position="268"/>
    </location>
</feature>
<feature type="sequence variant" id="VAR_058017" description="In dbSNP:rs1054629." evidence="11 12">
    <original>E</original>
    <variation>D</variation>
    <location>
        <position position="270"/>
    </location>
</feature>
<feature type="mutagenesis site" description="Significantly reduces cell attachment activity." evidence="9">
    <original>RGD</original>
    <variation>KAE</variation>
    <location>
        <begin position="286"/>
        <end position="288"/>
    </location>
</feature>
<feature type="mutagenesis site" description="Modestly reduces cell attachment activity." evidence="9">
    <original>D</original>
    <variation>E</variation>
    <location>
        <position position="288"/>
    </location>
</feature>
<feature type="sequence conflict" description="In Ref. 3; AAC37560." evidence="14" ref="3">
    <original>S</original>
    <variation>L</variation>
    <location>
        <position position="94"/>
    </location>
</feature>
<protein>
    <recommendedName>
        <fullName evidence="13">Integrin-binding sialoprotein</fullName>
    </recommendedName>
    <alternativeName>
        <fullName evidence="14">Bone sialoprotein 2</fullName>
    </alternativeName>
    <alternativeName>
        <fullName>Bone sialoprotein II</fullName>
        <shortName>BSP II</shortName>
    </alternativeName>
    <alternativeName>
        <fullName>Cell-binding sialoprotein</fullName>
    </alternativeName>
</protein>
<dbReference type="EMBL" id="J05213">
    <property type="protein sequence ID" value="AAC95490.1"/>
    <property type="molecule type" value="mRNA"/>
</dbReference>
<dbReference type="EMBL" id="L09558">
    <property type="protein sequence ID" value="AAA60549.1"/>
    <property type="molecule type" value="Genomic_DNA"/>
</dbReference>
<dbReference type="EMBL" id="L09554">
    <property type="protein sequence ID" value="AAA60549.1"/>
    <property type="status" value="JOINED"/>
    <property type="molecule type" value="Genomic_DNA"/>
</dbReference>
<dbReference type="EMBL" id="L09555">
    <property type="protein sequence ID" value="AAA60549.1"/>
    <property type="status" value="JOINED"/>
    <property type="molecule type" value="Genomic_DNA"/>
</dbReference>
<dbReference type="EMBL" id="L09556">
    <property type="protein sequence ID" value="AAA60549.1"/>
    <property type="status" value="JOINED"/>
    <property type="molecule type" value="Genomic_DNA"/>
</dbReference>
<dbReference type="EMBL" id="L09557">
    <property type="protein sequence ID" value="AAA60549.1"/>
    <property type="status" value="JOINED"/>
    <property type="molecule type" value="Genomic_DNA"/>
</dbReference>
<dbReference type="EMBL" id="L24759">
    <property type="protein sequence ID" value="AAC37560.1"/>
    <property type="molecule type" value="Genomic_DNA"/>
</dbReference>
<dbReference type="EMBL" id="L24757">
    <property type="protein sequence ID" value="AAC37560.1"/>
    <property type="status" value="JOINED"/>
    <property type="molecule type" value="Genomic_DNA"/>
</dbReference>
<dbReference type="EMBL" id="AC093768">
    <property type="status" value="NOT_ANNOTATED_CDS"/>
    <property type="molecule type" value="Genomic_DNA"/>
</dbReference>
<dbReference type="CCDS" id="CCDS3624.1"/>
<dbReference type="PIR" id="A35043">
    <property type="entry name" value="GEHUS"/>
</dbReference>
<dbReference type="RefSeq" id="NP_004958.2">
    <property type="nucleotide sequence ID" value="NM_004967.4"/>
</dbReference>
<dbReference type="BioGRID" id="109608">
    <property type="interactions" value="14"/>
</dbReference>
<dbReference type="FunCoup" id="P21815">
    <property type="interactions" value="467"/>
</dbReference>
<dbReference type="IntAct" id="P21815">
    <property type="interactions" value="12"/>
</dbReference>
<dbReference type="STRING" id="9606.ENSP00000226284"/>
<dbReference type="GlyCosmos" id="P21815">
    <property type="glycosylation" value="11 sites, No reported glycans"/>
</dbReference>
<dbReference type="GlyGen" id="P21815">
    <property type="glycosylation" value="11 sites"/>
</dbReference>
<dbReference type="iPTMnet" id="P21815"/>
<dbReference type="PhosphoSitePlus" id="P21815"/>
<dbReference type="BioMuta" id="IBSP"/>
<dbReference type="DMDM" id="317373545"/>
<dbReference type="MassIVE" id="P21815"/>
<dbReference type="PaxDb" id="9606-ENSP00000226284"/>
<dbReference type="PeptideAtlas" id="P21815"/>
<dbReference type="ProteomicsDB" id="53929"/>
<dbReference type="Antibodypedia" id="14494">
    <property type="antibodies" value="380 antibodies from 33 providers"/>
</dbReference>
<dbReference type="DNASU" id="3381"/>
<dbReference type="Ensembl" id="ENST00000226284.7">
    <property type="protein sequence ID" value="ENSP00000226284.5"/>
    <property type="gene ID" value="ENSG00000029559.7"/>
</dbReference>
<dbReference type="GeneID" id="3381"/>
<dbReference type="KEGG" id="hsa:3381"/>
<dbReference type="MANE-Select" id="ENST00000226284.7">
    <property type="protein sequence ID" value="ENSP00000226284.5"/>
    <property type="RefSeq nucleotide sequence ID" value="NM_004967.4"/>
    <property type="RefSeq protein sequence ID" value="NP_004958.2"/>
</dbReference>
<dbReference type="UCSC" id="uc003hqx.5">
    <property type="organism name" value="human"/>
</dbReference>
<dbReference type="AGR" id="HGNC:5341"/>
<dbReference type="CTD" id="3381"/>
<dbReference type="DisGeNET" id="3381"/>
<dbReference type="GeneCards" id="IBSP"/>
<dbReference type="HGNC" id="HGNC:5341">
    <property type="gene designation" value="IBSP"/>
</dbReference>
<dbReference type="HPA" id="ENSG00000029559">
    <property type="expression patterns" value="Tissue enhanced (pituitary)"/>
</dbReference>
<dbReference type="MIM" id="147563">
    <property type="type" value="gene"/>
</dbReference>
<dbReference type="neXtProt" id="NX_P21815"/>
<dbReference type="OpenTargets" id="ENSG00000029559"/>
<dbReference type="PharmGKB" id="PA29590"/>
<dbReference type="VEuPathDB" id="HostDB:ENSG00000029559"/>
<dbReference type="eggNOG" id="KOG1181">
    <property type="taxonomic scope" value="Eukaryota"/>
</dbReference>
<dbReference type="GeneTree" id="ENSGT00390000002485"/>
<dbReference type="HOGENOM" id="CLU_076119_0_0_1"/>
<dbReference type="InParanoid" id="P21815"/>
<dbReference type="OMA" id="HAYFYPH"/>
<dbReference type="OrthoDB" id="9909090at2759"/>
<dbReference type="PAN-GO" id="P21815">
    <property type="GO annotations" value="2 GO annotations based on evolutionary models"/>
</dbReference>
<dbReference type="PhylomeDB" id="P21815"/>
<dbReference type="TreeFam" id="TF338678"/>
<dbReference type="PathwayCommons" id="P21815"/>
<dbReference type="Reactome" id="R-HSA-216083">
    <property type="pathway name" value="Integrin cell surface interactions"/>
</dbReference>
<dbReference type="Reactome" id="R-HSA-3000178">
    <property type="pathway name" value="ECM proteoglycans"/>
</dbReference>
<dbReference type="SignaLink" id="P21815"/>
<dbReference type="SIGNOR" id="P21815"/>
<dbReference type="BioGRID-ORCS" id="3381">
    <property type="hits" value="9 hits in 1142 CRISPR screens"/>
</dbReference>
<dbReference type="ChiTaRS" id="IBSP">
    <property type="organism name" value="human"/>
</dbReference>
<dbReference type="GeneWiki" id="Bone_sialoprotein"/>
<dbReference type="GenomeRNAi" id="3381"/>
<dbReference type="Pharos" id="P21815">
    <property type="development level" value="Tbio"/>
</dbReference>
<dbReference type="PRO" id="PR:P21815"/>
<dbReference type="Proteomes" id="UP000005640">
    <property type="component" value="Chromosome 4"/>
</dbReference>
<dbReference type="RNAct" id="P21815">
    <property type="molecule type" value="protein"/>
</dbReference>
<dbReference type="Bgee" id="ENSG00000029559">
    <property type="expression patterns" value="Expressed in tibia and 105 other cell types or tissues"/>
</dbReference>
<dbReference type="GO" id="GO:0005576">
    <property type="term" value="C:extracellular region"/>
    <property type="evidence" value="ECO:0000304"/>
    <property type="project" value="Reactome"/>
</dbReference>
<dbReference type="GO" id="GO:0005615">
    <property type="term" value="C:extracellular space"/>
    <property type="evidence" value="ECO:0000250"/>
    <property type="project" value="UniProtKB"/>
</dbReference>
<dbReference type="GO" id="GO:0016020">
    <property type="term" value="C:membrane"/>
    <property type="evidence" value="ECO:0007005"/>
    <property type="project" value="UniProtKB"/>
</dbReference>
<dbReference type="GO" id="GO:0031982">
    <property type="term" value="C:vesicle"/>
    <property type="evidence" value="ECO:0000250"/>
    <property type="project" value="UniProtKB"/>
</dbReference>
<dbReference type="GO" id="GO:0005178">
    <property type="term" value="F:integrin binding"/>
    <property type="evidence" value="ECO:0000315"/>
    <property type="project" value="CAFA"/>
</dbReference>
<dbReference type="GO" id="GO:0036094">
    <property type="term" value="F:small molecule binding"/>
    <property type="evidence" value="ECO:0000353"/>
    <property type="project" value="DisProt"/>
</dbReference>
<dbReference type="GO" id="GO:0030282">
    <property type="term" value="P:bone mineralization"/>
    <property type="evidence" value="ECO:0000318"/>
    <property type="project" value="GO_Central"/>
</dbReference>
<dbReference type="GO" id="GO:0007155">
    <property type="term" value="P:cell adhesion"/>
    <property type="evidence" value="ECO:0000250"/>
    <property type="project" value="UniProtKB"/>
</dbReference>
<dbReference type="GO" id="GO:0071363">
    <property type="term" value="P:cellular response to growth factor stimulus"/>
    <property type="evidence" value="ECO:0000250"/>
    <property type="project" value="UniProtKB"/>
</dbReference>
<dbReference type="GO" id="GO:0030198">
    <property type="term" value="P:extracellular matrix organization"/>
    <property type="evidence" value="ECO:0000250"/>
    <property type="project" value="UniProtKB"/>
</dbReference>
<dbReference type="GO" id="GO:0001649">
    <property type="term" value="P:osteoblast differentiation"/>
    <property type="evidence" value="ECO:0007005"/>
    <property type="project" value="UniProtKB"/>
</dbReference>
<dbReference type="GO" id="GO:0045785">
    <property type="term" value="P:positive regulation of cell adhesion"/>
    <property type="evidence" value="ECO:0000315"/>
    <property type="project" value="CAFA"/>
</dbReference>
<dbReference type="DisProt" id="DP00332"/>
<dbReference type="InterPro" id="IPR008412">
    <property type="entry name" value="IBSP"/>
</dbReference>
<dbReference type="PANTHER" id="PTHR10345">
    <property type="entry name" value="BONE SIALOPROTEIN 2"/>
    <property type="match status" value="1"/>
</dbReference>
<dbReference type="PANTHER" id="PTHR10345:SF0">
    <property type="entry name" value="BONE SIALOPROTEIN 2"/>
    <property type="match status" value="1"/>
</dbReference>
<dbReference type="Pfam" id="PF05432">
    <property type="entry name" value="BSP_II"/>
    <property type="match status" value="1"/>
</dbReference>
<accession>P21815</accession>
<gene>
    <name type="primary">IBSP</name>
    <name type="synonym">BNSP</name>
</gene>
<keyword id="KW-0091">Biomineralization</keyword>
<keyword id="KW-0130">Cell adhesion</keyword>
<keyword id="KW-0903">Direct protein sequencing</keyword>
<keyword id="KW-0325">Glycoprotein</keyword>
<keyword id="KW-0597">Phosphoprotein</keyword>
<keyword id="KW-1267">Proteomics identification</keyword>
<keyword id="KW-1185">Reference proteome</keyword>
<keyword id="KW-0964">Secreted</keyword>
<keyword id="KW-0730">Sialic acid</keyword>
<keyword id="KW-0732">Signal</keyword>
<keyword id="KW-0765">Sulfation</keyword>
<evidence type="ECO:0000250" key="1">
    <source>
        <dbReference type="UniProtKB" id="Q28862"/>
    </source>
</evidence>
<evidence type="ECO:0000255" key="2"/>
<evidence type="ECO:0000256" key="3">
    <source>
        <dbReference type="SAM" id="MobiDB-lite"/>
    </source>
</evidence>
<evidence type="ECO:0000269" key="4">
    <source>
    </source>
</evidence>
<evidence type="ECO:0000269" key="5">
    <source>
    </source>
</evidence>
<evidence type="ECO:0000269" key="6">
    <source>
    </source>
</evidence>
<evidence type="ECO:0000269" key="7">
    <source>
    </source>
</evidence>
<evidence type="ECO:0000269" key="8">
    <source>
    </source>
</evidence>
<evidence type="ECO:0000269" key="9">
    <source>
    </source>
</evidence>
<evidence type="ECO:0000269" key="10">
    <source>
    </source>
</evidence>
<evidence type="ECO:0000269" key="11">
    <source>
    </source>
</evidence>
<evidence type="ECO:0000269" key="12">
    <source>
    </source>
</evidence>
<evidence type="ECO:0000303" key="13">
    <source>
    </source>
</evidence>
<evidence type="ECO:0000305" key="14"/>
<evidence type="ECO:0000305" key="15">
    <source>
    </source>
</evidence>
<evidence type="ECO:0000305" key="16">
    <source>
    </source>
</evidence>
<evidence type="ECO:0000305" key="17">
    <source>
    </source>
</evidence>